<keyword id="KW-0223">Dioxygenase</keyword>
<keyword id="KW-0349">Heme</keyword>
<keyword id="KW-0408">Iron</keyword>
<keyword id="KW-0479">Metal-binding</keyword>
<keyword id="KW-0560">Oxidoreductase</keyword>
<keyword id="KW-0823">Tryptophan catabolism</keyword>
<organism>
    <name type="scientific">Burkholderia mallei (strain NCTC 10229)</name>
    <dbReference type="NCBI Taxonomy" id="412022"/>
    <lineage>
        <taxon>Bacteria</taxon>
        <taxon>Pseudomonadati</taxon>
        <taxon>Pseudomonadota</taxon>
        <taxon>Betaproteobacteria</taxon>
        <taxon>Burkholderiales</taxon>
        <taxon>Burkholderiaceae</taxon>
        <taxon>Burkholderia</taxon>
        <taxon>pseudomallei group</taxon>
    </lineage>
</organism>
<protein>
    <recommendedName>
        <fullName evidence="1">Tryptophan 2,3-dioxygenase</fullName>
        <shortName evidence="1">TDO</shortName>
        <ecNumber evidence="1">1.13.11.11</ecNumber>
    </recommendedName>
    <alternativeName>
        <fullName evidence="1">Tryptamin 2,3-dioxygenase</fullName>
    </alternativeName>
    <alternativeName>
        <fullName evidence="1">Tryptophan oxygenase</fullName>
        <shortName evidence="1">TO</shortName>
        <shortName evidence="1">TRPO</shortName>
    </alternativeName>
    <alternativeName>
        <fullName evidence="1">Tryptophan pyrrolase</fullName>
    </alternativeName>
    <alternativeName>
        <fullName evidence="1">Tryptophanase</fullName>
    </alternativeName>
</protein>
<comment type="function">
    <text evidence="1">Heme-dependent dioxygenase that catalyzes the oxidative cleavage of the L-tryptophan (L-Trp) pyrrole ring and converts L-tryptophan to N-formyl-L-kynurenine. Catalyzes the oxidative cleavage of the indole moiety.</text>
</comment>
<comment type="catalytic activity">
    <reaction evidence="1">
        <text>L-tryptophan + O2 = N-formyl-L-kynurenine</text>
        <dbReference type="Rhea" id="RHEA:24536"/>
        <dbReference type="ChEBI" id="CHEBI:15379"/>
        <dbReference type="ChEBI" id="CHEBI:57912"/>
        <dbReference type="ChEBI" id="CHEBI:58629"/>
        <dbReference type="EC" id="1.13.11.11"/>
    </reaction>
</comment>
<comment type="cofactor">
    <cofactor evidence="1">
        <name>heme</name>
        <dbReference type="ChEBI" id="CHEBI:30413"/>
    </cofactor>
    <text evidence="1">Binds 1 heme group per subunit.</text>
</comment>
<comment type="pathway">
    <text evidence="1">Amino-acid degradation; L-tryptophan degradation via kynurenine pathway; L-kynurenine from L-tryptophan: step 1/2.</text>
</comment>
<comment type="subunit">
    <text evidence="1">Homotetramer.</text>
</comment>
<comment type="similarity">
    <text evidence="1">Belongs to the tryptophan 2,3-dioxygenase family.</text>
</comment>
<dbReference type="EC" id="1.13.11.11" evidence="1"/>
<dbReference type="EMBL" id="CP000546">
    <property type="protein sequence ID" value="ABN03832.1"/>
    <property type="molecule type" value="Genomic_DNA"/>
</dbReference>
<dbReference type="RefSeq" id="WP_004189970.1">
    <property type="nucleotide sequence ID" value="NC_008836.1"/>
</dbReference>
<dbReference type="SMR" id="A2S924"/>
<dbReference type="GeneID" id="92978121"/>
<dbReference type="KEGG" id="bml:BMA10229_A2485"/>
<dbReference type="HOGENOM" id="CLU_063240_0_0_4"/>
<dbReference type="UniPathway" id="UPA00333">
    <property type="reaction ID" value="UER00453"/>
</dbReference>
<dbReference type="Proteomes" id="UP000002283">
    <property type="component" value="Chromosome I"/>
</dbReference>
<dbReference type="GO" id="GO:0020037">
    <property type="term" value="F:heme binding"/>
    <property type="evidence" value="ECO:0000250"/>
    <property type="project" value="UniProtKB"/>
</dbReference>
<dbReference type="GO" id="GO:0046872">
    <property type="term" value="F:metal ion binding"/>
    <property type="evidence" value="ECO:0007669"/>
    <property type="project" value="UniProtKB-KW"/>
</dbReference>
<dbReference type="GO" id="GO:0004833">
    <property type="term" value="F:tryptophan 2,3-dioxygenase activity"/>
    <property type="evidence" value="ECO:0000250"/>
    <property type="project" value="UniProtKB"/>
</dbReference>
<dbReference type="GO" id="GO:0019442">
    <property type="term" value="P:L-tryptophan catabolic process to acetyl-CoA"/>
    <property type="evidence" value="ECO:0007669"/>
    <property type="project" value="TreeGrafter"/>
</dbReference>
<dbReference type="GO" id="GO:0019441">
    <property type="term" value="P:L-tryptophan catabolic process to kynurenine"/>
    <property type="evidence" value="ECO:0000250"/>
    <property type="project" value="UniProtKB"/>
</dbReference>
<dbReference type="FunFam" id="1.20.58.480:FF:000001">
    <property type="entry name" value="Tryptophan 2,3-dioxygenase"/>
    <property type="match status" value="1"/>
</dbReference>
<dbReference type="Gene3D" id="1.20.58.480">
    <property type="match status" value="1"/>
</dbReference>
<dbReference type="HAMAP" id="MF_01972">
    <property type="entry name" value="T23O"/>
    <property type="match status" value="1"/>
</dbReference>
<dbReference type="InterPro" id="IPR037217">
    <property type="entry name" value="Trp/Indoleamine_2_3_dOase-like"/>
</dbReference>
<dbReference type="InterPro" id="IPR017485">
    <property type="entry name" value="Trp_2-3-dOase_bac"/>
</dbReference>
<dbReference type="InterPro" id="IPR004981">
    <property type="entry name" value="Trp_2_3_dOase"/>
</dbReference>
<dbReference type="NCBIfam" id="TIGR03036">
    <property type="entry name" value="trp_2_3_diox"/>
    <property type="match status" value="1"/>
</dbReference>
<dbReference type="PANTHER" id="PTHR10138">
    <property type="entry name" value="TRYPTOPHAN 2,3-DIOXYGENASE"/>
    <property type="match status" value="1"/>
</dbReference>
<dbReference type="PANTHER" id="PTHR10138:SF0">
    <property type="entry name" value="TRYPTOPHAN 2,3-DIOXYGENASE"/>
    <property type="match status" value="1"/>
</dbReference>
<dbReference type="Pfam" id="PF03301">
    <property type="entry name" value="Trp_dioxygenase"/>
    <property type="match status" value="1"/>
</dbReference>
<dbReference type="SUPFAM" id="SSF140959">
    <property type="entry name" value="Indolic compounds 2,3-dioxygenase-like"/>
    <property type="match status" value="1"/>
</dbReference>
<sequence>MQPPGDDAAPRCPFAGAHAPDAPHVPEAAGDDVQAGWHRAQLDFSQSMSYGDYLSLDPILDAQHPRSPDHNEMLFIIQHQTSELWMKLALYELRAALASIRDDALPPAFKMLARVSRVLEQLVQAWNVLATMTPSEYSAMRPYLGASSGFQSYQYRELEFILGNKNAQMLRPHAHRPAIHAHLEASLQAPSLYDEVIRLLARRGFPIAPERLDADWTQPTRHDRTVETAWLAVYREPNAHWELYEMAEELVDLEDAFRQWRFRHVTTVERIIGFKQGTGSTSGAPYLRKMLDVVLFPELWHVRTTL</sequence>
<reference key="1">
    <citation type="journal article" date="2010" name="Genome Biol. Evol.">
        <title>Continuing evolution of Burkholderia mallei through genome reduction and large-scale rearrangements.</title>
        <authorList>
            <person name="Losada L."/>
            <person name="Ronning C.M."/>
            <person name="DeShazer D."/>
            <person name="Woods D."/>
            <person name="Fedorova N."/>
            <person name="Kim H.S."/>
            <person name="Shabalina S.A."/>
            <person name="Pearson T.R."/>
            <person name="Brinkac L."/>
            <person name="Tan P."/>
            <person name="Nandi T."/>
            <person name="Crabtree J."/>
            <person name="Badger J."/>
            <person name="Beckstrom-Sternberg S."/>
            <person name="Saqib M."/>
            <person name="Schutzer S.E."/>
            <person name="Keim P."/>
            <person name="Nierman W.C."/>
        </authorList>
    </citation>
    <scope>NUCLEOTIDE SEQUENCE [LARGE SCALE GENOMIC DNA]</scope>
    <source>
        <strain>NCTC 10229</strain>
    </source>
</reference>
<feature type="chain" id="PRO_0000360104" description="Tryptophan 2,3-dioxygenase">
    <location>
        <begin position="1"/>
        <end position="306"/>
    </location>
</feature>
<feature type="region of interest" description="Disordered" evidence="2">
    <location>
        <begin position="1"/>
        <end position="29"/>
    </location>
</feature>
<feature type="binding site" evidence="1">
    <location>
        <begin position="75"/>
        <end position="79"/>
    </location>
    <ligand>
        <name>substrate</name>
    </ligand>
</feature>
<feature type="binding site" evidence="1">
    <location>
        <position position="137"/>
    </location>
    <ligand>
        <name>substrate</name>
    </ligand>
</feature>
<feature type="binding site" evidence="1">
    <location>
        <position position="141"/>
    </location>
    <ligand>
        <name>substrate</name>
    </ligand>
</feature>
<feature type="binding site" description="axial binding residue" evidence="1">
    <location>
        <position position="264"/>
    </location>
    <ligand>
        <name>heme</name>
        <dbReference type="ChEBI" id="CHEBI:30413"/>
    </ligand>
    <ligandPart>
        <name>Fe</name>
        <dbReference type="ChEBI" id="CHEBI:18248"/>
    </ligandPart>
</feature>
<feature type="binding site" evidence="1">
    <location>
        <position position="278"/>
    </location>
    <ligand>
        <name>substrate</name>
    </ligand>
</feature>
<name>T23O_BURM9</name>
<gene>
    <name evidence="1" type="primary">kynA</name>
    <name type="ordered locus">BMA10229_A2485</name>
</gene>
<accession>A2S924</accession>
<evidence type="ECO:0000255" key="1">
    <source>
        <dbReference type="HAMAP-Rule" id="MF_01972"/>
    </source>
</evidence>
<evidence type="ECO:0000256" key="2">
    <source>
        <dbReference type="SAM" id="MobiDB-lite"/>
    </source>
</evidence>
<proteinExistence type="inferred from homology"/>